<proteinExistence type="inferred from homology"/>
<feature type="chain" id="PRO_1000014932" description="Chaperone protein HtpG">
    <location>
        <begin position="1"/>
        <end position="647"/>
    </location>
</feature>
<feature type="region of interest" description="A; substrate-binding" evidence="1">
    <location>
        <begin position="1"/>
        <end position="353"/>
    </location>
</feature>
<feature type="region of interest" description="B" evidence="1">
    <location>
        <begin position="354"/>
        <end position="567"/>
    </location>
</feature>
<feature type="region of interest" description="C" evidence="1">
    <location>
        <begin position="568"/>
        <end position="647"/>
    </location>
</feature>
<name>HTPG_MYCTA</name>
<evidence type="ECO:0000255" key="1">
    <source>
        <dbReference type="HAMAP-Rule" id="MF_00505"/>
    </source>
</evidence>
<sequence>MNAHVEQLEFQAEARQLLDLMVHSVYSNKDAFLRELISNASDALDKLRIEALRNKDLEVDTSDLHIEIDADKAARTLTVRDNGIGMAREEVVDLIGTLAKSGTAELRAQLREAKNAAASEELIGQFGIGFYSSFMVADKVQLLTRKAGESAATRWESSGEGTYTIESVEDAPQGTSVTLHLKPEDAEDDLHDYTSEWKIRNLVKKYSDFIAWPIRMDVERRTPASQEEGGEGGEETVTIETETLNSMKALWARPKEEVSEQEYKEFYKHVAHAWDDPLEIIAMKAEGTFEYQALLFIPSHAPFDLFDRDAHVGIQLYVKRVFIMGDCDQLMPEYLRFVKGVVDAQDMSLNVSREILQQDRQIKAIRRRLTKKVLSTIKDVQSSRPEDYRTFWTQFGRVLKEGLLSDIDNRETLLGISSFVSTYSEEEPTTLAEYVERMKDGQQQIFYATGETRQQLLKSPHLEAFKAKGYEVLLLTDPVDEVWVGMVPEFDGKPLQSVAKGEVDLSSEEDTSEAEREERQKEFADLLTWLQETLSDHVKEVRLSTRLTESPACLITDAFGMTPALARIYRASGQEVPVGKRILELNPSHPLVTGLRQAHQDRADDAEKSLAETAELLYGTALLAEGGALEDPARFAELLAERLARTL</sequence>
<accession>A5U4Y2</accession>
<dbReference type="EMBL" id="CP000611">
    <property type="protein sequence ID" value="ABQ74082.1"/>
    <property type="molecule type" value="Genomic_DNA"/>
</dbReference>
<dbReference type="RefSeq" id="WP_003411855.1">
    <property type="nucleotide sequence ID" value="NZ_CP016972.1"/>
</dbReference>
<dbReference type="SMR" id="A5U4Y2"/>
<dbReference type="GeneID" id="45426279"/>
<dbReference type="KEGG" id="mra:MRA_2316"/>
<dbReference type="eggNOG" id="COG0326">
    <property type="taxonomic scope" value="Bacteria"/>
</dbReference>
<dbReference type="HOGENOM" id="CLU_006684_3_0_11"/>
<dbReference type="Proteomes" id="UP000001988">
    <property type="component" value="Chromosome"/>
</dbReference>
<dbReference type="GO" id="GO:0005737">
    <property type="term" value="C:cytoplasm"/>
    <property type="evidence" value="ECO:0007669"/>
    <property type="project" value="UniProtKB-SubCell"/>
</dbReference>
<dbReference type="GO" id="GO:0005524">
    <property type="term" value="F:ATP binding"/>
    <property type="evidence" value="ECO:0007669"/>
    <property type="project" value="UniProtKB-UniRule"/>
</dbReference>
<dbReference type="GO" id="GO:0016887">
    <property type="term" value="F:ATP hydrolysis activity"/>
    <property type="evidence" value="ECO:0007669"/>
    <property type="project" value="InterPro"/>
</dbReference>
<dbReference type="GO" id="GO:0140662">
    <property type="term" value="F:ATP-dependent protein folding chaperone"/>
    <property type="evidence" value="ECO:0007669"/>
    <property type="project" value="InterPro"/>
</dbReference>
<dbReference type="GO" id="GO:0051082">
    <property type="term" value="F:unfolded protein binding"/>
    <property type="evidence" value="ECO:0007669"/>
    <property type="project" value="UniProtKB-UniRule"/>
</dbReference>
<dbReference type="CDD" id="cd16927">
    <property type="entry name" value="HATPase_Hsp90-like"/>
    <property type="match status" value="1"/>
</dbReference>
<dbReference type="FunFam" id="1.20.120.790:FF:000006">
    <property type="entry name" value="Chaperone protein HtpG"/>
    <property type="match status" value="1"/>
</dbReference>
<dbReference type="FunFam" id="3.40.50.11260:FF:000005">
    <property type="entry name" value="Heat shock protein 90"/>
    <property type="match status" value="1"/>
</dbReference>
<dbReference type="FunFam" id="3.30.230.80:FF:000002">
    <property type="entry name" value="Molecular chaperone HtpG"/>
    <property type="match status" value="1"/>
</dbReference>
<dbReference type="FunFam" id="3.30.565.10:FF:000009">
    <property type="entry name" value="Molecular chaperone HtpG"/>
    <property type="match status" value="1"/>
</dbReference>
<dbReference type="Gene3D" id="3.30.230.80">
    <property type="match status" value="1"/>
</dbReference>
<dbReference type="Gene3D" id="3.40.50.11260">
    <property type="match status" value="1"/>
</dbReference>
<dbReference type="Gene3D" id="1.20.120.790">
    <property type="entry name" value="Heat shock protein 90, C-terminal domain"/>
    <property type="match status" value="1"/>
</dbReference>
<dbReference type="Gene3D" id="3.30.565.10">
    <property type="entry name" value="Histidine kinase-like ATPase, C-terminal domain"/>
    <property type="match status" value="1"/>
</dbReference>
<dbReference type="HAMAP" id="MF_00505">
    <property type="entry name" value="HSP90"/>
    <property type="match status" value="1"/>
</dbReference>
<dbReference type="InterPro" id="IPR036890">
    <property type="entry name" value="HATPase_C_sf"/>
</dbReference>
<dbReference type="InterPro" id="IPR019805">
    <property type="entry name" value="Heat_shock_protein_90_CS"/>
</dbReference>
<dbReference type="InterPro" id="IPR037196">
    <property type="entry name" value="HSP90_C"/>
</dbReference>
<dbReference type="InterPro" id="IPR001404">
    <property type="entry name" value="Hsp90_fam"/>
</dbReference>
<dbReference type="InterPro" id="IPR020575">
    <property type="entry name" value="Hsp90_N"/>
</dbReference>
<dbReference type="InterPro" id="IPR020568">
    <property type="entry name" value="Ribosomal_Su5_D2-typ_SF"/>
</dbReference>
<dbReference type="NCBIfam" id="NF003555">
    <property type="entry name" value="PRK05218.1"/>
    <property type="match status" value="1"/>
</dbReference>
<dbReference type="PANTHER" id="PTHR11528">
    <property type="entry name" value="HEAT SHOCK PROTEIN 90 FAMILY MEMBER"/>
    <property type="match status" value="1"/>
</dbReference>
<dbReference type="Pfam" id="PF13589">
    <property type="entry name" value="HATPase_c_3"/>
    <property type="match status" value="1"/>
</dbReference>
<dbReference type="Pfam" id="PF00183">
    <property type="entry name" value="HSP90"/>
    <property type="match status" value="1"/>
</dbReference>
<dbReference type="PIRSF" id="PIRSF002583">
    <property type="entry name" value="Hsp90"/>
    <property type="match status" value="1"/>
</dbReference>
<dbReference type="PRINTS" id="PR00775">
    <property type="entry name" value="HEATSHOCK90"/>
</dbReference>
<dbReference type="SMART" id="SM00387">
    <property type="entry name" value="HATPase_c"/>
    <property type="match status" value="1"/>
</dbReference>
<dbReference type="SUPFAM" id="SSF55874">
    <property type="entry name" value="ATPase domain of HSP90 chaperone/DNA topoisomerase II/histidine kinase"/>
    <property type="match status" value="1"/>
</dbReference>
<dbReference type="SUPFAM" id="SSF110942">
    <property type="entry name" value="HSP90 C-terminal domain"/>
    <property type="match status" value="1"/>
</dbReference>
<dbReference type="SUPFAM" id="SSF54211">
    <property type="entry name" value="Ribosomal protein S5 domain 2-like"/>
    <property type="match status" value="1"/>
</dbReference>
<dbReference type="PROSITE" id="PS00298">
    <property type="entry name" value="HSP90"/>
    <property type="match status" value="1"/>
</dbReference>
<reference key="1">
    <citation type="journal article" date="2008" name="PLoS ONE">
        <title>Genetic basis of virulence attenuation revealed by comparative genomic analysis of Mycobacterium tuberculosis strain H37Ra versus H37Rv.</title>
        <authorList>
            <person name="Zheng H."/>
            <person name="Lu L."/>
            <person name="Wang B."/>
            <person name="Pu S."/>
            <person name="Zhang X."/>
            <person name="Zhu G."/>
            <person name="Shi W."/>
            <person name="Zhang L."/>
            <person name="Wang H."/>
            <person name="Wang S."/>
            <person name="Zhao G."/>
            <person name="Zhang Y."/>
        </authorList>
    </citation>
    <scope>NUCLEOTIDE SEQUENCE [LARGE SCALE GENOMIC DNA]</scope>
    <source>
        <strain>ATCC 25177 / H37Ra</strain>
    </source>
</reference>
<keyword id="KW-0067">ATP-binding</keyword>
<keyword id="KW-0143">Chaperone</keyword>
<keyword id="KW-0963">Cytoplasm</keyword>
<keyword id="KW-0547">Nucleotide-binding</keyword>
<keyword id="KW-1185">Reference proteome</keyword>
<keyword id="KW-0346">Stress response</keyword>
<gene>
    <name evidence="1" type="primary">htpG</name>
    <name type="ordered locus">MRA_2316</name>
</gene>
<organism>
    <name type="scientific">Mycobacterium tuberculosis (strain ATCC 25177 / H37Ra)</name>
    <dbReference type="NCBI Taxonomy" id="419947"/>
    <lineage>
        <taxon>Bacteria</taxon>
        <taxon>Bacillati</taxon>
        <taxon>Actinomycetota</taxon>
        <taxon>Actinomycetes</taxon>
        <taxon>Mycobacteriales</taxon>
        <taxon>Mycobacteriaceae</taxon>
        <taxon>Mycobacterium</taxon>
        <taxon>Mycobacterium tuberculosis complex</taxon>
    </lineage>
</organism>
<comment type="function">
    <text evidence="1">Molecular chaperone. Has ATPase activity.</text>
</comment>
<comment type="subunit">
    <text evidence="1">Homodimer.</text>
</comment>
<comment type="subcellular location">
    <subcellularLocation>
        <location evidence="1">Cytoplasm</location>
    </subcellularLocation>
</comment>
<comment type="similarity">
    <text evidence="1">Belongs to the heat shock protein 90 family.</text>
</comment>
<protein>
    <recommendedName>
        <fullName evidence="1">Chaperone protein HtpG</fullName>
    </recommendedName>
    <alternativeName>
        <fullName evidence="1">Heat shock protein HtpG</fullName>
    </alternativeName>
    <alternativeName>
        <fullName evidence="1">High temperature protein G</fullName>
    </alternativeName>
</protein>